<name>COBS_CLOPE</name>
<feature type="chain" id="PRO_0000146871" description="Adenosylcobinamide-GDP ribazoletransferase">
    <location>
        <begin position="1"/>
        <end position="251"/>
    </location>
</feature>
<feature type="transmembrane region" description="Helical" evidence="1">
    <location>
        <begin position="36"/>
        <end position="56"/>
    </location>
</feature>
<feature type="transmembrane region" description="Helical" evidence="1">
    <location>
        <begin position="60"/>
        <end position="80"/>
    </location>
</feature>
<feature type="transmembrane region" description="Helical" evidence="1">
    <location>
        <begin position="110"/>
        <end position="130"/>
    </location>
</feature>
<feature type="transmembrane region" description="Helical" evidence="1">
    <location>
        <begin position="141"/>
        <end position="161"/>
    </location>
</feature>
<feature type="transmembrane region" description="Helical" evidence="1">
    <location>
        <begin position="181"/>
        <end position="201"/>
    </location>
</feature>
<feature type="transmembrane region" description="Helical" evidence="1">
    <location>
        <begin position="202"/>
        <end position="222"/>
    </location>
</feature>
<feature type="transmembrane region" description="Helical" evidence="1">
    <location>
        <begin position="231"/>
        <end position="251"/>
    </location>
</feature>
<proteinExistence type="inferred from homology"/>
<protein>
    <recommendedName>
        <fullName evidence="1">Adenosylcobinamide-GDP ribazoletransferase</fullName>
        <ecNumber evidence="1">2.7.8.26</ecNumber>
    </recommendedName>
    <alternativeName>
        <fullName evidence="1">Cobalamin synthase</fullName>
    </alternativeName>
    <alternativeName>
        <fullName evidence="1">Cobalamin-5'-phosphate synthase</fullName>
    </alternativeName>
</protein>
<reference key="1">
    <citation type="journal article" date="2002" name="Proc. Natl. Acad. Sci. U.S.A.">
        <title>Complete genome sequence of Clostridium perfringens, an anaerobic flesh-eater.</title>
        <authorList>
            <person name="Shimizu T."/>
            <person name="Ohtani K."/>
            <person name="Hirakawa H."/>
            <person name="Ohshima K."/>
            <person name="Yamashita A."/>
            <person name="Shiba T."/>
            <person name="Ogasawara N."/>
            <person name="Hattori M."/>
            <person name="Kuhara S."/>
            <person name="Hayashi H."/>
        </authorList>
    </citation>
    <scope>NUCLEOTIDE SEQUENCE [LARGE SCALE GENOMIC DNA]</scope>
    <source>
        <strain>13 / Type A</strain>
    </source>
</reference>
<gene>
    <name evidence="1" type="primary">cobS</name>
    <name type="ordered locus">CPE1036</name>
</gene>
<organism>
    <name type="scientific">Clostridium perfringens (strain 13 / Type A)</name>
    <dbReference type="NCBI Taxonomy" id="195102"/>
    <lineage>
        <taxon>Bacteria</taxon>
        <taxon>Bacillati</taxon>
        <taxon>Bacillota</taxon>
        <taxon>Clostridia</taxon>
        <taxon>Eubacteriales</taxon>
        <taxon>Clostridiaceae</taxon>
        <taxon>Clostridium</taxon>
    </lineage>
</organism>
<keyword id="KW-1003">Cell membrane</keyword>
<keyword id="KW-0169">Cobalamin biosynthesis</keyword>
<keyword id="KW-0460">Magnesium</keyword>
<keyword id="KW-0472">Membrane</keyword>
<keyword id="KW-1185">Reference proteome</keyword>
<keyword id="KW-0808">Transferase</keyword>
<keyword id="KW-0812">Transmembrane</keyword>
<keyword id="KW-1133">Transmembrane helix</keyword>
<sequence>MKIFYKAINMTLSMFTVIPSPKYEWDDRAAKHIMKLYPFIGLIIGALWYLSFFVLSKLNVPIMLMAALILTVPYILTGFLHLDGFMDVSDALLSRRDKETKLRILKDSTVGAFSVISVVLLLLVEFAGMFTVLNKNLDMRVLIFIPIASRAINGYFIVSQEMLGQSSLAKFFKEGTGKVDEIILLGIYVLVALITFFTLGINYLIAILAMGLISFILLLKVKKELGGINGDVAGYILVLMEFTGILLLGII</sequence>
<accession>Q8XLK5</accession>
<comment type="function">
    <text evidence="1">Joins adenosylcobinamide-GDP and alpha-ribazole to generate adenosylcobalamin (Ado-cobalamin). Also synthesizes adenosylcobalamin 5'-phosphate from adenosylcobinamide-GDP and alpha-ribazole 5'-phosphate.</text>
</comment>
<comment type="catalytic activity">
    <reaction evidence="1">
        <text>alpha-ribazole + adenosylcob(III)inamide-GDP = adenosylcob(III)alamin + GMP + H(+)</text>
        <dbReference type="Rhea" id="RHEA:16049"/>
        <dbReference type="ChEBI" id="CHEBI:10329"/>
        <dbReference type="ChEBI" id="CHEBI:15378"/>
        <dbReference type="ChEBI" id="CHEBI:18408"/>
        <dbReference type="ChEBI" id="CHEBI:58115"/>
        <dbReference type="ChEBI" id="CHEBI:60487"/>
        <dbReference type="EC" id="2.7.8.26"/>
    </reaction>
</comment>
<comment type="catalytic activity">
    <reaction evidence="1">
        <text>alpha-ribazole 5'-phosphate + adenosylcob(III)inamide-GDP = adenosylcob(III)alamin 5'-phosphate + GMP + H(+)</text>
        <dbReference type="Rhea" id="RHEA:23560"/>
        <dbReference type="ChEBI" id="CHEBI:15378"/>
        <dbReference type="ChEBI" id="CHEBI:57918"/>
        <dbReference type="ChEBI" id="CHEBI:58115"/>
        <dbReference type="ChEBI" id="CHEBI:60487"/>
        <dbReference type="ChEBI" id="CHEBI:60493"/>
        <dbReference type="EC" id="2.7.8.26"/>
    </reaction>
</comment>
<comment type="cofactor">
    <cofactor evidence="1">
        <name>Mg(2+)</name>
        <dbReference type="ChEBI" id="CHEBI:18420"/>
    </cofactor>
</comment>
<comment type="pathway">
    <text evidence="1">Cofactor biosynthesis; adenosylcobalamin biosynthesis; adenosylcobalamin from cob(II)yrinate a,c-diamide: step 7/7.</text>
</comment>
<comment type="subcellular location">
    <subcellularLocation>
        <location evidence="1">Cell membrane</location>
        <topology evidence="1">Multi-pass membrane protein</topology>
    </subcellularLocation>
</comment>
<comment type="similarity">
    <text evidence="1">Belongs to the CobS family.</text>
</comment>
<evidence type="ECO:0000255" key="1">
    <source>
        <dbReference type="HAMAP-Rule" id="MF_00719"/>
    </source>
</evidence>
<dbReference type="EC" id="2.7.8.26" evidence="1"/>
<dbReference type="EMBL" id="BA000016">
    <property type="protein sequence ID" value="BAB80742.1"/>
    <property type="molecule type" value="Genomic_DNA"/>
</dbReference>
<dbReference type="RefSeq" id="WP_011010192.1">
    <property type="nucleotide sequence ID" value="NC_003366.1"/>
</dbReference>
<dbReference type="STRING" id="195102.gene:10490299"/>
<dbReference type="KEGG" id="cpe:CPE1036"/>
<dbReference type="HOGENOM" id="CLU_057426_1_2_9"/>
<dbReference type="UniPathway" id="UPA00148">
    <property type="reaction ID" value="UER00238"/>
</dbReference>
<dbReference type="Proteomes" id="UP000000818">
    <property type="component" value="Chromosome"/>
</dbReference>
<dbReference type="GO" id="GO:0005886">
    <property type="term" value="C:plasma membrane"/>
    <property type="evidence" value="ECO:0007669"/>
    <property type="project" value="UniProtKB-SubCell"/>
</dbReference>
<dbReference type="GO" id="GO:0051073">
    <property type="term" value="F:adenosylcobinamide-GDP ribazoletransferase activity"/>
    <property type="evidence" value="ECO:0007669"/>
    <property type="project" value="UniProtKB-UniRule"/>
</dbReference>
<dbReference type="GO" id="GO:0008818">
    <property type="term" value="F:cobalamin 5'-phosphate synthase activity"/>
    <property type="evidence" value="ECO:0007669"/>
    <property type="project" value="UniProtKB-UniRule"/>
</dbReference>
<dbReference type="GO" id="GO:0009236">
    <property type="term" value="P:cobalamin biosynthetic process"/>
    <property type="evidence" value="ECO:0007669"/>
    <property type="project" value="UniProtKB-UniRule"/>
</dbReference>
<dbReference type="HAMAP" id="MF_00719">
    <property type="entry name" value="CobS"/>
    <property type="match status" value="1"/>
</dbReference>
<dbReference type="InterPro" id="IPR003805">
    <property type="entry name" value="CobS"/>
</dbReference>
<dbReference type="PANTHER" id="PTHR34148">
    <property type="entry name" value="ADENOSYLCOBINAMIDE-GDP RIBAZOLETRANSFERASE"/>
    <property type="match status" value="1"/>
</dbReference>
<dbReference type="PANTHER" id="PTHR34148:SF1">
    <property type="entry name" value="ADENOSYLCOBINAMIDE-GDP RIBAZOLETRANSFERASE"/>
    <property type="match status" value="1"/>
</dbReference>
<dbReference type="Pfam" id="PF02654">
    <property type="entry name" value="CobS"/>
    <property type="match status" value="1"/>
</dbReference>